<reference key="1">
    <citation type="submission" date="2007-06" db="EMBL/GenBank/DDBJ databases">
        <title>Complete sequence of Clostridium beijerinckii NCIMB 8052.</title>
        <authorList>
            <consortium name="US DOE Joint Genome Institute"/>
            <person name="Copeland A."/>
            <person name="Lucas S."/>
            <person name="Lapidus A."/>
            <person name="Barry K."/>
            <person name="Detter J.C."/>
            <person name="Glavina del Rio T."/>
            <person name="Hammon N."/>
            <person name="Israni S."/>
            <person name="Dalin E."/>
            <person name="Tice H."/>
            <person name="Pitluck S."/>
            <person name="Sims D."/>
            <person name="Brettin T."/>
            <person name="Bruce D."/>
            <person name="Tapia R."/>
            <person name="Brainard J."/>
            <person name="Schmutz J."/>
            <person name="Larimer F."/>
            <person name="Land M."/>
            <person name="Hauser L."/>
            <person name="Kyrpides N."/>
            <person name="Mikhailova N."/>
            <person name="Bennet G."/>
            <person name="Cann I."/>
            <person name="Chen J.-S."/>
            <person name="Contreras A.L."/>
            <person name="Jones D."/>
            <person name="Kashket E."/>
            <person name="Mitchell W."/>
            <person name="Stoddard S."/>
            <person name="Schwarz W."/>
            <person name="Qureshi N."/>
            <person name="Young M."/>
            <person name="Shi Z."/>
            <person name="Ezeji T."/>
            <person name="White B."/>
            <person name="Blaschek H."/>
            <person name="Richardson P."/>
        </authorList>
    </citation>
    <scope>NUCLEOTIDE SEQUENCE [LARGE SCALE GENOMIC DNA]</scope>
    <source>
        <strain>ATCC 51743 / NCIMB 8052</strain>
    </source>
</reference>
<protein>
    <recommendedName>
        <fullName evidence="1">UPF0735 ACT domain-containing protein Cbei_1295</fullName>
    </recommendedName>
</protein>
<gene>
    <name type="ordered locus">Cbei_1295</name>
</gene>
<accession>A6LSZ5</accession>
<feature type="chain" id="PRO_0000366297" description="UPF0735 ACT domain-containing protein Cbei_1295">
    <location>
        <begin position="1"/>
        <end position="146"/>
    </location>
</feature>
<feature type="domain" description="ACT" evidence="1">
    <location>
        <begin position="70"/>
        <end position="145"/>
    </location>
</feature>
<evidence type="ECO:0000255" key="1">
    <source>
        <dbReference type="HAMAP-Rule" id="MF_00707"/>
    </source>
</evidence>
<sequence length="146" mass="16455">MMSGDYLVIDKRVLPDVYEKVLFAKKLLKDGKVKEITEAVKIAGISRSVYYKYRDFVFDFAETSEGRKVTYNIIFKNEKGLLSNISNYITEKGGDILTINQGIPLNGYANLSITIDLSTVDGDIKTLTEGLLNIRNVEKVEFIGME</sequence>
<name>Y1295_CLOB8</name>
<organism>
    <name type="scientific">Clostridium beijerinckii (strain ATCC 51743 / NCIMB 8052)</name>
    <name type="common">Clostridium acetobutylicum</name>
    <dbReference type="NCBI Taxonomy" id="290402"/>
    <lineage>
        <taxon>Bacteria</taxon>
        <taxon>Bacillati</taxon>
        <taxon>Bacillota</taxon>
        <taxon>Clostridia</taxon>
        <taxon>Eubacteriales</taxon>
        <taxon>Clostridiaceae</taxon>
        <taxon>Clostridium</taxon>
    </lineage>
</organism>
<proteinExistence type="inferred from homology"/>
<comment type="similarity">
    <text evidence="1">Belongs to the UPF0735 family.</text>
</comment>
<dbReference type="EMBL" id="CP000721">
    <property type="protein sequence ID" value="ABR33475.1"/>
    <property type="molecule type" value="Genomic_DNA"/>
</dbReference>
<dbReference type="SMR" id="A6LSZ5"/>
<dbReference type="KEGG" id="cbe:Cbei_1295"/>
<dbReference type="eggNOG" id="COG4492">
    <property type="taxonomic scope" value="Bacteria"/>
</dbReference>
<dbReference type="HOGENOM" id="CLU_128147_0_0_9"/>
<dbReference type="Proteomes" id="UP000000565">
    <property type="component" value="Chromosome"/>
</dbReference>
<dbReference type="CDD" id="cd04888">
    <property type="entry name" value="ACT_PheB-BS"/>
    <property type="match status" value="1"/>
</dbReference>
<dbReference type="Gene3D" id="3.30.70.260">
    <property type="match status" value="1"/>
</dbReference>
<dbReference type="HAMAP" id="MF_00707">
    <property type="entry name" value="UPF0735"/>
    <property type="match status" value="1"/>
</dbReference>
<dbReference type="InterPro" id="IPR045865">
    <property type="entry name" value="ACT-like_dom_sf"/>
</dbReference>
<dbReference type="InterPro" id="IPR002912">
    <property type="entry name" value="ACT_dom"/>
</dbReference>
<dbReference type="InterPro" id="IPR008310">
    <property type="entry name" value="UPF0735_ACT_dom-cont"/>
</dbReference>
<dbReference type="NCBIfam" id="NF003361">
    <property type="entry name" value="PRK04435.1"/>
    <property type="match status" value="1"/>
</dbReference>
<dbReference type="Pfam" id="PF13291">
    <property type="entry name" value="ACT_4"/>
    <property type="match status" value="1"/>
</dbReference>
<dbReference type="PIRSF" id="PIRSF025624">
    <property type="entry name" value="ACT_PheB"/>
    <property type="match status" value="1"/>
</dbReference>
<dbReference type="SUPFAM" id="SSF55021">
    <property type="entry name" value="ACT-like"/>
    <property type="match status" value="1"/>
</dbReference>
<dbReference type="PROSITE" id="PS51671">
    <property type="entry name" value="ACT"/>
    <property type="match status" value="1"/>
</dbReference>